<organism>
    <name type="scientific">Mycoplasmoides gallisepticum (strain R(low / passage 15 / clone 2))</name>
    <name type="common">Mycoplasma gallisepticum</name>
    <dbReference type="NCBI Taxonomy" id="710127"/>
    <lineage>
        <taxon>Bacteria</taxon>
        <taxon>Bacillati</taxon>
        <taxon>Mycoplasmatota</taxon>
        <taxon>Mycoplasmoidales</taxon>
        <taxon>Mycoplasmoidaceae</taxon>
        <taxon>Mycoplasmoides</taxon>
    </lineage>
</organism>
<comment type="function">
    <text evidence="1">One of the primary rRNA binding proteins. Required for association of the 30S and 50S subunits to form the 70S ribosome, for tRNA binding and peptide bond formation. It has been suggested to have peptidyltransferase activity; this is somewhat controversial. Makes several contacts with the 16S rRNA in the 70S ribosome.</text>
</comment>
<comment type="subunit">
    <text evidence="1">Part of the 50S ribosomal subunit. Forms a bridge to the 30S subunit in the 70S ribosome.</text>
</comment>
<comment type="similarity">
    <text evidence="1">Belongs to the universal ribosomal protein uL2 family.</text>
</comment>
<dbReference type="EMBL" id="AF036708">
    <property type="protein sequence ID" value="AAB95390.1"/>
    <property type="molecule type" value="Genomic_DNA"/>
</dbReference>
<dbReference type="EMBL" id="AE015450">
    <property type="protein sequence ID" value="AAP56404.1"/>
    <property type="molecule type" value="Genomic_DNA"/>
</dbReference>
<dbReference type="RefSeq" id="WP_011113283.1">
    <property type="nucleotide sequence ID" value="NC_004829.2"/>
</dbReference>
<dbReference type="SMR" id="O52335"/>
<dbReference type="GeneID" id="93509872"/>
<dbReference type="KEGG" id="mga:MGA_0712"/>
<dbReference type="HOGENOM" id="CLU_036235_2_1_14"/>
<dbReference type="OrthoDB" id="9778722at2"/>
<dbReference type="Proteomes" id="UP000001418">
    <property type="component" value="Chromosome"/>
</dbReference>
<dbReference type="GO" id="GO:0015934">
    <property type="term" value="C:large ribosomal subunit"/>
    <property type="evidence" value="ECO:0007669"/>
    <property type="project" value="InterPro"/>
</dbReference>
<dbReference type="GO" id="GO:0019843">
    <property type="term" value="F:rRNA binding"/>
    <property type="evidence" value="ECO:0007669"/>
    <property type="project" value="UniProtKB-UniRule"/>
</dbReference>
<dbReference type="GO" id="GO:0003735">
    <property type="term" value="F:structural constituent of ribosome"/>
    <property type="evidence" value="ECO:0007669"/>
    <property type="project" value="InterPro"/>
</dbReference>
<dbReference type="GO" id="GO:0016740">
    <property type="term" value="F:transferase activity"/>
    <property type="evidence" value="ECO:0007669"/>
    <property type="project" value="InterPro"/>
</dbReference>
<dbReference type="GO" id="GO:0002181">
    <property type="term" value="P:cytoplasmic translation"/>
    <property type="evidence" value="ECO:0007669"/>
    <property type="project" value="TreeGrafter"/>
</dbReference>
<dbReference type="FunFam" id="2.30.30.30:FF:000001">
    <property type="entry name" value="50S ribosomal protein L2"/>
    <property type="match status" value="1"/>
</dbReference>
<dbReference type="FunFam" id="4.10.950.10:FF:000001">
    <property type="entry name" value="50S ribosomal protein L2"/>
    <property type="match status" value="1"/>
</dbReference>
<dbReference type="Gene3D" id="2.30.30.30">
    <property type="match status" value="1"/>
</dbReference>
<dbReference type="Gene3D" id="2.40.50.140">
    <property type="entry name" value="Nucleic acid-binding proteins"/>
    <property type="match status" value="1"/>
</dbReference>
<dbReference type="Gene3D" id="4.10.950.10">
    <property type="entry name" value="Ribosomal protein L2, domain 3"/>
    <property type="match status" value="1"/>
</dbReference>
<dbReference type="HAMAP" id="MF_01320_B">
    <property type="entry name" value="Ribosomal_uL2_B"/>
    <property type="match status" value="1"/>
</dbReference>
<dbReference type="InterPro" id="IPR012340">
    <property type="entry name" value="NA-bd_OB-fold"/>
</dbReference>
<dbReference type="InterPro" id="IPR014722">
    <property type="entry name" value="Rib_uL2_dom2"/>
</dbReference>
<dbReference type="InterPro" id="IPR002171">
    <property type="entry name" value="Ribosomal_uL2"/>
</dbReference>
<dbReference type="InterPro" id="IPR005880">
    <property type="entry name" value="Ribosomal_uL2_bac/org-type"/>
</dbReference>
<dbReference type="InterPro" id="IPR022669">
    <property type="entry name" value="Ribosomal_uL2_C"/>
</dbReference>
<dbReference type="InterPro" id="IPR022671">
    <property type="entry name" value="Ribosomal_uL2_CS"/>
</dbReference>
<dbReference type="InterPro" id="IPR014726">
    <property type="entry name" value="Ribosomal_uL2_dom3"/>
</dbReference>
<dbReference type="InterPro" id="IPR022666">
    <property type="entry name" value="Ribosomal_uL2_RNA-bd_dom"/>
</dbReference>
<dbReference type="InterPro" id="IPR008991">
    <property type="entry name" value="Translation_prot_SH3-like_sf"/>
</dbReference>
<dbReference type="NCBIfam" id="TIGR01171">
    <property type="entry name" value="rplB_bact"/>
    <property type="match status" value="1"/>
</dbReference>
<dbReference type="PANTHER" id="PTHR13691:SF5">
    <property type="entry name" value="LARGE RIBOSOMAL SUBUNIT PROTEIN UL2M"/>
    <property type="match status" value="1"/>
</dbReference>
<dbReference type="PANTHER" id="PTHR13691">
    <property type="entry name" value="RIBOSOMAL PROTEIN L2"/>
    <property type="match status" value="1"/>
</dbReference>
<dbReference type="Pfam" id="PF00181">
    <property type="entry name" value="Ribosomal_L2"/>
    <property type="match status" value="1"/>
</dbReference>
<dbReference type="Pfam" id="PF03947">
    <property type="entry name" value="Ribosomal_L2_C"/>
    <property type="match status" value="1"/>
</dbReference>
<dbReference type="PIRSF" id="PIRSF002158">
    <property type="entry name" value="Ribosomal_L2"/>
    <property type="match status" value="1"/>
</dbReference>
<dbReference type="SMART" id="SM01383">
    <property type="entry name" value="Ribosomal_L2"/>
    <property type="match status" value="1"/>
</dbReference>
<dbReference type="SMART" id="SM01382">
    <property type="entry name" value="Ribosomal_L2_C"/>
    <property type="match status" value="1"/>
</dbReference>
<dbReference type="SUPFAM" id="SSF50249">
    <property type="entry name" value="Nucleic acid-binding proteins"/>
    <property type="match status" value="1"/>
</dbReference>
<dbReference type="SUPFAM" id="SSF50104">
    <property type="entry name" value="Translation proteins SH3-like domain"/>
    <property type="match status" value="1"/>
</dbReference>
<dbReference type="PROSITE" id="PS00467">
    <property type="entry name" value="RIBOSOMAL_L2"/>
    <property type="match status" value="1"/>
</dbReference>
<reference key="1">
    <citation type="journal article" date="2000" name="Mol. Biol. (Mosk.)">
        <title>Determination and analysis of the nucleotide sequence of a segment of a Mycoplasma gallisepticum strain A5969 chromosome, containing operons S10 and rrn23-5.</title>
        <authorList>
            <person name="Skamrov A.V."/>
            <person name="Gol'dman M.A."/>
            <person name="Feoktistova E.S."/>
            <person name="Bibilashvili R.S."/>
        </authorList>
    </citation>
    <scope>NUCLEOTIDE SEQUENCE [GENOMIC DNA]</scope>
    <source>
        <strain>A5969Var.B</strain>
    </source>
</reference>
<reference key="2">
    <citation type="journal article" date="2003" name="Microbiology">
        <title>The complete genome sequence of the avian pathogen Mycoplasma gallisepticum strain R(low).</title>
        <authorList>
            <person name="Papazisi L."/>
            <person name="Gorton T.S."/>
            <person name="Kutish G."/>
            <person name="Markham P.F."/>
            <person name="Browning G.F."/>
            <person name="Nguyen D.K."/>
            <person name="Swartzell S."/>
            <person name="Madan A."/>
            <person name="Mahairas G."/>
            <person name="Geary S.J."/>
        </authorList>
    </citation>
    <scope>NUCLEOTIDE SEQUENCE [LARGE SCALE GENOMIC DNA]</scope>
    <source>
        <strain>R(low / passage 15 / clone 2)</strain>
    </source>
</reference>
<protein>
    <recommendedName>
        <fullName evidence="1">Large ribosomal subunit protein uL2</fullName>
    </recommendedName>
    <alternativeName>
        <fullName evidence="3">50S ribosomal protein L2</fullName>
    </alternativeName>
</protein>
<gene>
    <name evidence="1" type="primary">rplB</name>
    <name evidence="1" type="synonym">rpl2</name>
    <name type="ordered locus">MYCGA0540</name>
    <name type="ORF">MGA_0712</name>
</gene>
<feature type="chain" id="PRO_0000129580" description="Large ribosomal subunit protein uL2">
    <location>
        <begin position="1"/>
        <end position="283"/>
    </location>
</feature>
<feature type="region of interest" description="Disordered" evidence="2">
    <location>
        <begin position="37"/>
        <end position="59"/>
    </location>
</feature>
<feature type="region of interest" description="Disordered" evidence="2">
    <location>
        <begin position="219"/>
        <end position="283"/>
    </location>
</feature>
<feature type="compositionally biased region" description="Basic residues" evidence="2">
    <location>
        <begin position="256"/>
        <end position="269"/>
    </location>
</feature>
<feature type="sequence conflict" description="In Ref. 1; AAB95390." evidence="3" ref="1">
    <original>N</original>
    <variation>S</variation>
    <location>
        <position position="42"/>
    </location>
</feature>
<accession>O52335</accession>
<evidence type="ECO:0000255" key="1">
    <source>
        <dbReference type="HAMAP-Rule" id="MF_01320"/>
    </source>
</evidence>
<evidence type="ECO:0000256" key="2">
    <source>
        <dbReference type="SAM" id="MobiDB-lite"/>
    </source>
</evidence>
<evidence type="ECO:0000305" key="3"/>
<proteinExistence type="inferred from homology"/>
<keyword id="KW-1185">Reference proteome</keyword>
<keyword id="KW-0687">Ribonucleoprotein</keyword>
<keyword id="KW-0689">Ribosomal protein</keyword>
<keyword id="KW-0694">RNA-binding</keyword>
<keyword id="KW-0699">rRNA-binding</keyword>
<sequence length="283" mass="31246">MPVKKIVNRSNSGIHHKISIDYSKVLTTNTPQKSLLAKKKKNSGRNNQGKITVRHRGGGSKRKYRIIDFKRNLHDDKIALVKSIEYDPNRSAFISLIAYENGYRSYILTPQGIKVGDKVVSSSQAIDIKVGNCMPLEFIPEGTMVHNIEMTPGKGAQIARSAGAYAQILGKDDTGKYINLKLGSKEVRKFLKNCRAVVGIASNVDHNLVLLGKAGTTRHKGIRPTVRGSAMNPNDHPHGGGEGRSPVGRDAPRTPWGKRHMGVKTRNNKKSSTQLIIRRRNSK</sequence>
<name>RL2_MYCGA</name>